<feature type="chain" id="PRO_0000450513" description="AdoMet-dependent heme synthase">
    <location>
        <begin position="1"/>
        <end position="349"/>
    </location>
</feature>
<feature type="domain" description="Radical SAM core" evidence="1">
    <location>
        <begin position="5"/>
        <end position="214"/>
    </location>
</feature>
<feature type="binding site" evidence="1">
    <location>
        <position position="19"/>
    </location>
    <ligand>
        <name>[4Fe-4S] cluster</name>
        <dbReference type="ChEBI" id="CHEBI:49883"/>
        <note>4Fe-4S-S-AdoMet</note>
    </ligand>
</feature>
<feature type="binding site" evidence="1">
    <location>
        <position position="23"/>
    </location>
    <ligand>
        <name>[4Fe-4S] cluster</name>
        <dbReference type="ChEBI" id="CHEBI:49883"/>
        <note>4Fe-4S-S-AdoMet</note>
    </ligand>
</feature>
<feature type="binding site" evidence="1">
    <location>
        <position position="26"/>
    </location>
    <ligand>
        <name>[4Fe-4S] cluster</name>
        <dbReference type="ChEBI" id="CHEBI:49883"/>
        <note>4Fe-4S-S-AdoMet</note>
    </ligand>
</feature>
<name>AHBD_METBF</name>
<reference key="1">
    <citation type="journal article" date="2006" name="J. Bacteriol.">
        <title>The Methanosarcina barkeri genome: comparative analysis with Methanosarcina acetivorans and Methanosarcina mazei reveals extensive rearrangement within methanosarcinal genomes.</title>
        <authorList>
            <person name="Maeder D.L."/>
            <person name="Anderson I."/>
            <person name="Brettin T.S."/>
            <person name="Bruce D.C."/>
            <person name="Gilna P."/>
            <person name="Han C.S."/>
            <person name="Lapidus A."/>
            <person name="Metcalf W.W."/>
            <person name="Saunders E."/>
            <person name="Tapia R."/>
            <person name="Sowers K.R."/>
        </authorList>
    </citation>
    <scope>NUCLEOTIDE SEQUENCE [LARGE SCALE GENOMIC DNA]</scope>
    <source>
        <strain>Fusaro / DSM 804</strain>
    </source>
</reference>
<reference key="2">
    <citation type="journal article" date="2014" name="Archaea">
        <title>The alternative route to heme in the methanogenic archaeon Methanosarcina barkeri.</title>
        <authorList>
            <person name="Kuehner M."/>
            <person name="Haufschildt K."/>
            <person name="Neumann A."/>
            <person name="Storbeck S."/>
            <person name="Streif J."/>
            <person name="Layer G."/>
        </authorList>
    </citation>
    <scope>FUNCTION</scope>
    <scope>CATALYTIC ACTIVITY</scope>
    <scope>COFACTOR</scope>
    <scope>PATHWAY</scope>
</reference>
<comment type="function">
    <text evidence="2">Involved in siroheme-dependent heme b biosynthesis. Catalyzes the conversion of Fe-coproporphyrin III into heme by the oxidative decarboxylation of two propionate side chains.</text>
</comment>
<comment type="catalytic activity">
    <reaction evidence="2">
        <text>Fe-coproporphyrin III + 2 S-adenosyl-L-methionine = heme b + 2 5'-deoxyadenosine + 2 L-methionine + 2 CO2</text>
        <dbReference type="Rhea" id="RHEA:56520"/>
        <dbReference type="ChEBI" id="CHEBI:16526"/>
        <dbReference type="ChEBI" id="CHEBI:17319"/>
        <dbReference type="ChEBI" id="CHEBI:57844"/>
        <dbReference type="ChEBI" id="CHEBI:59789"/>
        <dbReference type="ChEBI" id="CHEBI:60344"/>
        <dbReference type="ChEBI" id="CHEBI:68438"/>
        <dbReference type="EC" id="1.3.98.6"/>
    </reaction>
</comment>
<comment type="cofactor">
    <cofactor evidence="2">
        <name>[4Fe-4S] cluster</name>
        <dbReference type="ChEBI" id="CHEBI:49883"/>
    </cofactor>
    <text evidence="2">May bind 2 [4Fe-4S] clusters.</text>
</comment>
<comment type="pathway">
    <text evidence="2">Porphyrin-containing compound metabolism; protoheme biosynthesis.</text>
</comment>
<comment type="similarity">
    <text evidence="4">Belongs to the radical SAM superfamily.</text>
</comment>
<evidence type="ECO:0000255" key="1">
    <source>
        <dbReference type="PROSITE-ProRule" id="PRU01266"/>
    </source>
</evidence>
<evidence type="ECO:0000269" key="2">
    <source>
    </source>
</evidence>
<evidence type="ECO:0000303" key="3">
    <source>
    </source>
</evidence>
<evidence type="ECO:0000305" key="4"/>
<evidence type="ECO:0000312" key="5">
    <source>
        <dbReference type="EMBL" id="AAZ70415.1"/>
    </source>
</evidence>
<gene>
    <name evidence="3" type="primary">ahbD</name>
    <name evidence="5" type="ordered locus">Mbar_A1458</name>
</gene>
<organism>
    <name type="scientific">Methanosarcina barkeri (strain Fusaro / DSM 804)</name>
    <dbReference type="NCBI Taxonomy" id="269797"/>
    <lineage>
        <taxon>Archaea</taxon>
        <taxon>Methanobacteriati</taxon>
        <taxon>Methanobacteriota</taxon>
        <taxon>Stenosarchaea group</taxon>
        <taxon>Methanomicrobia</taxon>
        <taxon>Methanosarcinales</taxon>
        <taxon>Methanosarcinaceae</taxon>
        <taxon>Methanosarcina</taxon>
    </lineage>
</organism>
<sequence length="349" mass="38631">MIAMTNAPRLIAWELTAGCNLNCVHCRGASTSSVPAGELTTDEAKHFIDEVASIGKPILILSGGEPLTRPDVFEIARYGTDAGLRVVLATNGTLLTPEIVEKLRAAGVQRLSVSIDGANAETHDNFRGMPGAFERTLAGIEVLRKADFPFQINTTVSKRNLEEITKTFELAKELGAVAYHVFFLVPTGRGDESDEVSPADYERILHWFYEMQKESKIQLKATCAPHYFRIMRQQAKKEGIEISVKTHGYEAMTKGCLGGTGFCFVSSVGKVFPCGYLPVLAGNIREQPFREIWENAEVFRKLRDPEELKGKCGICEYKKVCAGCRARAYAATGDYLEEEPYCIYRPGKK</sequence>
<proteinExistence type="evidence at protein level"/>
<protein>
    <recommendedName>
        <fullName evidence="4">AdoMet-dependent heme synthase</fullName>
        <ecNumber evidence="2">1.3.98.6</ecNumber>
    </recommendedName>
</protein>
<keyword id="KW-0004">4Fe-4S</keyword>
<keyword id="KW-0350">Heme biosynthesis</keyword>
<keyword id="KW-0408">Iron</keyword>
<keyword id="KW-0411">Iron-sulfur</keyword>
<keyword id="KW-0479">Metal-binding</keyword>
<keyword id="KW-0560">Oxidoreductase</keyword>
<keyword id="KW-0949">S-adenosyl-L-methionine</keyword>
<accession>Q46CH7</accession>
<dbReference type="EC" id="1.3.98.6" evidence="2"/>
<dbReference type="EMBL" id="CP000099">
    <property type="protein sequence ID" value="AAZ70415.1"/>
    <property type="molecule type" value="Genomic_DNA"/>
</dbReference>
<dbReference type="SMR" id="Q46CH7"/>
<dbReference type="STRING" id="269797.Mbar_A1458"/>
<dbReference type="PaxDb" id="269797-Mbar_A1458"/>
<dbReference type="KEGG" id="mba:Mbar_A1458"/>
<dbReference type="eggNOG" id="arCOG00938">
    <property type="taxonomic scope" value="Archaea"/>
</dbReference>
<dbReference type="HOGENOM" id="CLU_009273_4_0_2"/>
<dbReference type="OrthoDB" id="30736at2157"/>
<dbReference type="BRENDA" id="1.3.98.6">
    <property type="organism ID" value="3250"/>
</dbReference>
<dbReference type="UniPathway" id="UPA00252"/>
<dbReference type="GO" id="GO:0051539">
    <property type="term" value="F:4 iron, 4 sulfur cluster binding"/>
    <property type="evidence" value="ECO:0007669"/>
    <property type="project" value="UniProtKB-KW"/>
</dbReference>
<dbReference type="GO" id="GO:0046872">
    <property type="term" value="F:metal ion binding"/>
    <property type="evidence" value="ECO:0007669"/>
    <property type="project" value="UniProtKB-KW"/>
</dbReference>
<dbReference type="GO" id="GO:0016491">
    <property type="term" value="F:oxidoreductase activity"/>
    <property type="evidence" value="ECO:0007669"/>
    <property type="project" value="UniProtKB-KW"/>
</dbReference>
<dbReference type="GO" id="GO:0006783">
    <property type="term" value="P:heme biosynthetic process"/>
    <property type="evidence" value="ECO:0007669"/>
    <property type="project" value="UniProtKB-KW"/>
</dbReference>
<dbReference type="CDD" id="cd01335">
    <property type="entry name" value="Radical_SAM"/>
    <property type="match status" value="1"/>
</dbReference>
<dbReference type="CDD" id="cd21123">
    <property type="entry name" value="SPASM_MftC-like"/>
    <property type="match status" value="1"/>
</dbReference>
<dbReference type="Gene3D" id="3.20.20.70">
    <property type="entry name" value="Aldolase class I"/>
    <property type="match status" value="1"/>
</dbReference>
<dbReference type="InterPro" id="IPR023885">
    <property type="entry name" value="4Fe4S-binding_SPASM_dom"/>
</dbReference>
<dbReference type="InterPro" id="IPR013785">
    <property type="entry name" value="Aldolase_TIM"/>
</dbReference>
<dbReference type="InterPro" id="IPR034391">
    <property type="entry name" value="Cmo-like_SPASM_containing"/>
</dbReference>
<dbReference type="InterPro" id="IPR006638">
    <property type="entry name" value="Elp3/MiaA/NifB-like_rSAM"/>
</dbReference>
<dbReference type="InterPro" id="IPR017200">
    <property type="entry name" value="PqqE-like"/>
</dbReference>
<dbReference type="InterPro" id="IPR050377">
    <property type="entry name" value="Radical_SAM_PqqE_MftC-like"/>
</dbReference>
<dbReference type="InterPro" id="IPR007197">
    <property type="entry name" value="rSAM"/>
</dbReference>
<dbReference type="InterPro" id="IPR030896">
    <property type="entry name" value="rSAM_AhbD_hemeb"/>
</dbReference>
<dbReference type="NCBIfam" id="TIGR04545">
    <property type="entry name" value="rSAM_ahbD_hemeb"/>
    <property type="match status" value="1"/>
</dbReference>
<dbReference type="NCBIfam" id="TIGR04085">
    <property type="entry name" value="rSAM_more_4Fe4S"/>
    <property type="match status" value="1"/>
</dbReference>
<dbReference type="PANTHER" id="PTHR11228">
    <property type="entry name" value="RADICAL SAM DOMAIN PROTEIN"/>
    <property type="match status" value="1"/>
</dbReference>
<dbReference type="PANTHER" id="PTHR11228:SF34">
    <property type="entry name" value="TUNGSTEN-CONTAINING ALDEHYDE FERREDOXIN OXIDOREDUCTASE COFACTOR MODIFYING PROTEIN"/>
    <property type="match status" value="1"/>
</dbReference>
<dbReference type="Pfam" id="PF13353">
    <property type="entry name" value="Fer4_12"/>
    <property type="match status" value="1"/>
</dbReference>
<dbReference type="Pfam" id="PF04055">
    <property type="entry name" value="Radical_SAM"/>
    <property type="match status" value="1"/>
</dbReference>
<dbReference type="Pfam" id="PF13186">
    <property type="entry name" value="SPASM"/>
    <property type="match status" value="1"/>
</dbReference>
<dbReference type="PIRSF" id="PIRSF037420">
    <property type="entry name" value="PQQ_syn_pqqE"/>
    <property type="match status" value="1"/>
</dbReference>
<dbReference type="SFLD" id="SFLDF00542">
    <property type="entry name" value="alternative_heme_biosynthesis"/>
    <property type="match status" value="1"/>
</dbReference>
<dbReference type="SFLD" id="SFLDG01387">
    <property type="entry name" value="BtrN-like_SPASM_domain_contain"/>
    <property type="match status" value="1"/>
</dbReference>
<dbReference type="SFLD" id="SFLDG01072">
    <property type="entry name" value="dehydrogenase_like"/>
    <property type="match status" value="1"/>
</dbReference>
<dbReference type="SMART" id="SM00729">
    <property type="entry name" value="Elp3"/>
    <property type="match status" value="1"/>
</dbReference>
<dbReference type="SUPFAM" id="SSF102114">
    <property type="entry name" value="Radical SAM enzymes"/>
    <property type="match status" value="1"/>
</dbReference>
<dbReference type="PROSITE" id="PS51918">
    <property type="entry name" value="RADICAL_SAM"/>
    <property type="match status" value="1"/>
</dbReference>